<proteinExistence type="inferred from homology"/>
<organism>
    <name type="scientific">Salmonella paratyphi A (strain ATCC 9150 / SARB42)</name>
    <dbReference type="NCBI Taxonomy" id="295319"/>
    <lineage>
        <taxon>Bacteria</taxon>
        <taxon>Pseudomonadati</taxon>
        <taxon>Pseudomonadota</taxon>
        <taxon>Gammaproteobacteria</taxon>
        <taxon>Enterobacterales</taxon>
        <taxon>Enterobacteriaceae</taxon>
        <taxon>Salmonella</taxon>
    </lineage>
</organism>
<reference key="1">
    <citation type="journal article" date="2004" name="Nat. Genet.">
        <title>Comparison of genome degradation in Paratyphi A and Typhi, human-restricted serovars of Salmonella enterica that cause typhoid.</title>
        <authorList>
            <person name="McClelland M."/>
            <person name="Sanderson K.E."/>
            <person name="Clifton S.W."/>
            <person name="Latreille P."/>
            <person name="Porwollik S."/>
            <person name="Sabo A."/>
            <person name="Meyer R."/>
            <person name="Bieri T."/>
            <person name="Ozersky P."/>
            <person name="McLellan M."/>
            <person name="Harkins C.R."/>
            <person name="Wang C."/>
            <person name="Nguyen C."/>
            <person name="Berghoff A."/>
            <person name="Elliott G."/>
            <person name="Kohlberg S."/>
            <person name="Strong C."/>
            <person name="Du F."/>
            <person name="Carter J."/>
            <person name="Kremizki C."/>
            <person name="Layman D."/>
            <person name="Leonard S."/>
            <person name="Sun H."/>
            <person name="Fulton L."/>
            <person name="Nash W."/>
            <person name="Miner T."/>
            <person name="Minx P."/>
            <person name="Delehaunty K."/>
            <person name="Fronick C."/>
            <person name="Magrini V."/>
            <person name="Nhan M."/>
            <person name="Warren W."/>
            <person name="Florea L."/>
            <person name="Spieth J."/>
            <person name="Wilson R.K."/>
        </authorList>
    </citation>
    <scope>NUCLEOTIDE SEQUENCE [LARGE SCALE GENOMIC DNA]</scope>
    <source>
        <strain>ATCC 9150 / SARB42</strain>
    </source>
</reference>
<dbReference type="EC" id="4.1.2.20" evidence="1"/>
<dbReference type="EMBL" id="CP000026">
    <property type="protein sequence ID" value="AAV78948.1"/>
    <property type="molecule type" value="Genomic_DNA"/>
</dbReference>
<dbReference type="RefSeq" id="WP_001057712.1">
    <property type="nucleotide sequence ID" value="NC_006511.1"/>
</dbReference>
<dbReference type="SMR" id="Q5PCB8"/>
<dbReference type="KEGG" id="spt:SPA3118"/>
<dbReference type="HOGENOM" id="CLU_059964_1_0_6"/>
<dbReference type="UniPathway" id="UPA00565">
    <property type="reaction ID" value="UER00630"/>
</dbReference>
<dbReference type="Proteomes" id="UP000008185">
    <property type="component" value="Chromosome"/>
</dbReference>
<dbReference type="GO" id="GO:0005737">
    <property type="term" value="C:cytoplasm"/>
    <property type="evidence" value="ECO:0007669"/>
    <property type="project" value="TreeGrafter"/>
</dbReference>
<dbReference type="GO" id="GO:0008672">
    <property type="term" value="F:2-dehydro-3-deoxyglucarate aldolase activity"/>
    <property type="evidence" value="ECO:0007669"/>
    <property type="project" value="UniProtKB-UniRule"/>
</dbReference>
<dbReference type="GO" id="GO:0000287">
    <property type="term" value="F:magnesium ion binding"/>
    <property type="evidence" value="ECO:0007669"/>
    <property type="project" value="UniProtKB-UniRule"/>
</dbReference>
<dbReference type="GO" id="GO:0042838">
    <property type="term" value="P:D-glucarate catabolic process"/>
    <property type="evidence" value="ECO:0007669"/>
    <property type="project" value="UniProtKB-UniRule"/>
</dbReference>
<dbReference type="GO" id="GO:0046392">
    <property type="term" value="P:galactarate catabolic process"/>
    <property type="evidence" value="ECO:0007669"/>
    <property type="project" value="UniProtKB-UniRule"/>
</dbReference>
<dbReference type="FunFam" id="3.20.20.60:FF:000004">
    <property type="entry name" value="5-keto-4-deoxy-D-glucarate aldolase"/>
    <property type="match status" value="1"/>
</dbReference>
<dbReference type="Gene3D" id="3.20.20.60">
    <property type="entry name" value="Phosphoenolpyruvate-binding domains"/>
    <property type="match status" value="1"/>
</dbReference>
<dbReference type="HAMAP" id="MF_01291">
    <property type="entry name" value="KDGluc_aldolase"/>
    <property type="match status" value="1"/>
</dbReference>
<dbReference type="InterPro" id="IPR005000">
    <property type="entry name" value="Aldolase/citrate-lyase_domain"/>
</dbReference>
<dbReference type="InterPro" id="IPR017648">
    <property type="entry name" value="GarL"/>
</dbReference>
<dbReference type="InterPro" id="IPR050251">
    <property type="entry name" value="HpcH-HpaI_aldolase"/>
</dbReference>
<dbReference type="InterPro" id="IPR015813">
    <property type="entry name" value="Pyrv/PenolPyrv_kinase-like_dom"/>
</dbReference>
<dbReference type="InterPro" id="IPR040442">
    <property type="entry name" value="Pyrv_kinase-like_dom_sf"/>
</dbReference>
<dbReference type="NCBIfam" id="TIGR03239">
    <property type="entry name" value="GarL"/>
    <property type="match status" value="1"/>
</dbReference>
<dbReference type="NCBIfam" id="NF007849">
    <property type="entry name" value="PRK10558.1"/>
    <property type="match status" value="1"/>
</dbReference>
<dbReference type="PANTHER" id="PTHR30502">
    <property type="entry name" value="2-KETO-3-DEOXY-L-RHAMNONATE ALDOLASE"/>
    <property type="match status" value="1"/>
</dbReference>
<dbReference type="PANTHER" id="PTHR30502:SF4">
    <property type="entry name" value="5-KETO-4-DEOXY-D-GLUCARATE ALDOLASE"/>
    <property type="match status" value="1"/>
</dbReference>
<dbReference type="Pfam" id="PF03328">
    <property type="entry name" value="HpcH_HpaI"/>
    <property type="match status" value="1"/>
</dbReference>
<dbReference type="SUPFAM" id="SSF51621">
    <property type="entry name" value="Phosphoenolpyruvate/pyruvate domain"/>
    <property type="match status" value="1"/>
</dbReference>
<keyword id="KW-0456">Lyase</keyword>
<keyword id="KW-0460">Magnesium</keyword>
<keyword id="KW-0479">Metal-binding</keyword>
<feature type="chain" id="PRO_0000353155" description="5-keto-4-deoxy-D-glucarate aldolase">
    <location>
        <begin position="1"/>
        <end position="256"/>
    </location>
</feature>
<feature type="active site" description="Proton acceptor" evidence="1">
    <location>
        <position position="50"/>
    </location>
</feature>
<feature type="binding site" evidence="1">
    <location>
        <position position="151"/>
    </location>
    <ligand>
        <name>substrate</name>
    </ligand>
</feature>
<feature type="binding site" evidence="1">
    <location>
        <position position="153"/>
    </location>
    <ligand>
        <name>Mg(2+)</name>
        <dbReference type="ChEBI" id="CHEBI:18420"/>
    </ligand>
</feature>
<feature type="binding site" evidence="1">
    <location>
        <position position="178"/>
    </location>
    <ligand>
        <name>substrate</name>
    </ligand>
</feature>
<feature type="binding site" evidence="1">
    <location>
        <position position="179"/>
    </location>
    <ligand>
        <name>Mg(2+)</name>
        <dbReference type="ChEBI" id="CHEBI:18420"/>
    </ligand>
</feature>
<feature type="binding site" evidence="1">
    <location>
        <position position="179"/>
    </location>
    <ligand>
        <name>substrate</name>
    </ligand>
</feature>
<feature type="site" description="Transition state stabilizer" evidence="1">
    <location>
        <position position="75"/>
    </location>
</feature>
<feature type="site" description="Increases basicity of active site His" evidence="1">
    <location>
        <position position="89"/>
    </location>
</feature>
<protein>
    <recommendedName>
        <fullName evidence="1">5-keto-4-deoxy-D-glucarate aldolase</fullName>
        <shortName evidence="1">KDGluc aldolase</shortName>
        <shortName evidence="1">KDGlucA</shortName>
        <ecNumber evidence="1">4.1.2.20</ecNumber>
    </recommendedName>
    <alternativeName>
        <fullName evidence="1">2-dehydro-3-deoxy-D-glucarate aldolase</fullName>
    </alternativeName>
    <alternativeName>
        <fullName evidence="1">2-keto-3-deoxy-D-glucarate aldolase</fullName>
    </alternativeName>
    <alternativeName>
        <fullName evidence="1">5-dehydro-4-deoxy-D-glucarate aldolase</fullName>
    </alternativeName>
    <alternativeName>
        <fullName evidence="1">Alpha-keto-beta-deoxy-D-glucarate aldolase</fullName>
    </alternativeName>
</protein>
<comment type="function">
    <text evidence="1">Catalyzes the reversible retro-aldol cleavage of both 5-keto-4-deoxy-D-glucarate and 2-keto-3-deoxy-D-glucarate to pyruvate and tartronic semialdehyde.</text>
</comment>
<comment type="catalytic activity">
    <reaction evidence="1">
        <text>5-dehydro-4-deoxy-D-glucarate = 2-hydroxy-3-oxopropanoate + pyruvate</text>
        <dbReference type="Rhea" id="RHEA:27726"/>
        <dbReference type="ChEBI" id="CHEBI:15361"/>
        <dbReference type="ChEBI" id="CHEBI:42819"/>
        <dbReference type="ChEBI" id="CHEBI:57978"/>
    </reaction>
</comment>
<comment type="catalytic activity">
    <reaction evidence="1">
        <text>2-dehydro-3-deoxy-D-glucarate = 2-hydroxy-3-oxopropanoate + pyruvate</text>
        <dbReference type="Rhea" id="RHEA:10268"/>
        <dbReference type="ChEBI" id="CHEBI:15361"/>
        <dbReference type="ChEBI" id="CHEBI:57978"/>
        <dbReference type="ChEBI" id="CHEBI:58098"/>
        <dbReference type="EC" id="4.1.2.20"/>
    </reaction>
</comment>
<comment type="cofactor">
    <cofactor evidence="1">
        <name>Mg(2+)</name>
        <dbReference type="ChEBI" id="CHEBI:18420"/>
    </cofactor>
    <text evidence="1">Binds 1 Mg(2+) ion per subunit.</text>
</comment>
<comment type="pathway">
    <text evidence="1">Carbohydrate acid metabolism; galactarate degradation; D-glycerate from galactarate: step 2/3.</text>
</comment>
<comment type="subunit">
    <text evidence="1">Homohexamer; trimer of dimers.</text>
</comment>
<comment type="similarity">
    <text evidence="1">Belongs to the HpcH/HpaI aldolase family. KDGluc aldolase subfamily.</text>
</comment>
<sequence length="256" mass="27307">MNNAIFPNKFKAALAAQQVQIGCWSALASPITTEVLGLAGFDWLVLDGEHAPNDVSTLIPQLMALKGSASAPVVRVPTNEPVIIKRMLDIGFYNFLIPFVETQEEAARAVASTRYPPEGIRGVSVSHRANMFGTVPDYFAQSNKNITIIVQIESQLGVDNVDAIAATEGVDGIFVGPSDLAAALGHLGNASHPDVQQTIQHIFARAKAHGKPCGILAPVEADARRYLEWGATFVAVGSDLGAFRASTQKLADTFKK</sequence>
<name>GARL_SALPA</name>
<gene>
    <name evidence="1" type="primary">garL</name>
    <name type="ordered locus">SPA3118</name>
</gene>
<accession>Q5PCB8</accession>
<evidence type="ECO:0000255" key="1">
    <source>
        <dbReference type="HAMAP-Rule" id="MF_01291"/>
    </source>
</evidence>